<organism>
    <name type="scientific">Borrelia garinii subsp. bavariensis (strain ATCC BAA-2496 / DSM 23469 / PBi)</name>
    <name type="common">Borreliella bavariensis</name>
    <dbReference type="NCBI Taxonomy" id="290434"/>
    <lineage>
        <taxon>Bacteria</taxon>
        <taxon>Pseudomonadati</taxon>
        <taxon>Spirochaetota</taxon>
        <taxon>Spirochaetia</taxon>
        <taxon>Spirochaetales</taxon>
        <taxon>Borreliaceae</taxon>
        <taxon>Borreliella</taxon>
    </lineage>
</organism>
<gene>
    <name evidence="1" type="primary">hisS</name>
    <name type="ordered locus">BG0137</name>
</gene>
<proteinExistence type="inferred from homology"/>
<name>SYH_BORGP</name>
<reference key="1">
    <citation type="journal article" date="2004" name="Nucleic Acids Res.">
        <title>Comparative analysis of the Borrelia garinii genome.</title>
        <authorList>
            <person name="Gloeckner G."/>
            <person name="Lehmann R."/>
            <person name="Romualdi A."/>
            <person name="Pradella S."/>
            <person name="Schulte-Spechtel U."/>
            <person name="Schilhabel M."/>
            <person name="Wilske B."/>
            <person name="Suehnel J."/>
            <person name="Platzer M."/>
        </authorList>
    </citation>
    <scope>NUCLEOTIDE SEQUENCE [LARGE SCALE GENOMIC DNA]</scope>
    <source>
        <strain>ATCC BAA-2496 / DSM 23469 / PBi</strain>
    </source>
</reference>
<dbReference type="EC" id="6.1.1.21" evidence="1"/>
<dbReference type="EMBL" id="CP000013">
    <property type="protein sequence ID" value="AAU06995.1"/>
    <property type="molecule type" value="Genomic_DNA"/>
</dbReference>
<dbReference type="RefSeq" id="WP_011193488.1">
    <property type="nucleotide sequence ID" value="NC_006156.1"/>
</dbReference>
<dbReference type="SMR" id="Q662M6"/>
<dbReference type="GeneID" id="45160931"/>
<dbReference type="KEGG" id="bga:BG0137"/>
<dbReference type="eggNOG" id="COG0124">
    <property type="taxonomic scope" value="Bacteria"/>
</dbReference>
<dbReference type="HOGENOM" id="CLU_025113_3_0_12"/>
<dbReference type="OrthoDB" id="9800814at2"/>
<dbReference type="Proteomes" id="UP000002276">
    <property type="component" value="Chromosome"/>
</dbReference>
<dbReference type="GO" id="GO:0005737">
    <property type="term" value="C:cytoplasm"/>
    <property type="evidence" value="ECO:0007669"/>
    <property type="project" value="UniProtKB-SubCell"/>
</dbReference>
<dbReference type="GO" id="GO:0005524">
    <property type="term" value="F:ATP binding"/>
    <property type="evidence" value="ECO:0007669"/>
    <property type="project" value="UniProtKB-UniRule"/>
</dbReference>
<dbReference type="GO" id="GO:0004821">
    <property type="term" value="F:histidine-tRNA ligase activity"/>
    <property type="evidence" value="ECO:0007669"/>
    <property type="project" value="UniProtKB-UniRule"/>
</dbReference>
<dbReference type="GO" id="GO:0006427">
    <property type="term" value="P:histidyl-tRNA aminoacylation"/>
    <property type="evidence" value="ECO:0007669"/>
    <property type="project" value="UniProtKB-UniRule"/>
</dbReference>
<dbReference type="CDD" id="cd00773">
    <property type="entry name" value="HisRS-like_core"/>
    <property type="match status" value="1"/>
</dbReference>
<dbReference type="CDD" id="cd00859">
    <property type="entry name" value="HisRS_anticodon"/>
    <property type="match status" value="1"/>
</dbReference>
<dbReference type="Gene3D" id="3.40.50.800">
    <property type="entry name" value="Anticodon-binding domain"/>
    <property type="match status" value="1"/>
</dbReference>
<dbReference type="Gene3D" id="3.30.930.10">
    <property type="entry name" value="Bira Bifunctional Protein, Domain 2"/>
    <property type="match status" value="1"/>
</dbReference>
<dbReference type="HAMAP" id="MF_00127">
    <property type="entry name" value="His_tRNA_synth"/>
    <property type="match status" value="1"/>
</dbReference>
<dbReference type="InterPro" id="IPR006195">
    <property type="entry name" value="aa-tRNA-synth_II"/>
</dbReference>
<dbReference type="InterPro" id="IPR045864">
    <property type="entry name" value="aa-tRNA-synth_II/BPL/LPL"/>
</dbReference>
<dbReference type="InterPro" id="IPR004154">
    <property type="entry name" value="Anticodon-bd"/>
</dbReference>
<dbReference type="InterPro" id="IPR036621">
    <property type="entry name" value="Anticodon-bd_dom_sf"/>
</dbReference>
<dbReference type="InterPro" id="IPR015807">
    <property type="entry name" value="His-tRNA-ligase"/>
</dbReference>
<dbReference type="InterPro" id="IPR041715">
    <property type="entry name" value="HisRS-like_core"/>
</dbReference>
<dbReference type="InterPro" id="IPR004516">
    <property type="entry name" value="HisRS/HisZ"/>
</dbReference>
<dbReference type="InterPro" id="IPR033656">
    <property type="entry name" value="HisRS_anticodon"/>
</dbReference>
<dbReference type="NCBIfam" id="TIGR00442">
    <property type="entry name" value="hisS"/>
    <property type="match status" value="1"/>
</dbReference>
<dbReference type="PANTHER" id="PTHR11476:SF7">
    <property type="entry name" value="HISTIDINE--TRNA LIGASE"/>
    <property type="match status" value="1"/>
</dbReference>
<dbReference type="PANTHER" id="PTHR11476">
    <property type="entry name" value="HISTIDYL-TRNA SYNTHETASE"/>
    <property type="match status" value="1"/>
</dbReference>
<dbReference type="Pfam" id="PF03129">
    <property type="entry name" value="HGTP_anticodon"/>
    <property type="match status" value="1"/>
</dbReference>
<dbReference type="Pfam" id="PF13393">
    <property type="entry name" value="tRNA-synt_His"/>
    <property type="match status" value="1"/>
</dbReference>
<dbReference type="PIRSF" id="PIRSF001549">
    <property type="entry name" value="His-tRNA_synth"/>
    <property type="match status" value="1"/>
</dbReference>
<dbReference type="SUPFAM" id="SSF52954">
    <property type="entry name" value="Class II aaRS ABD-related"/>
    <property type="match status" value="1"/>
</dbReference>
<dbReference type="SUPFAM" id="SSF55681">
    <property type="entry name" value="Class II aaRS and biotin synthetases"/>
    <property type="match status" value="1"/>
</dbReference>
<dbReference type="PROSITE" id="PS50862">
    <property type="entry name" value="AA_TRNA_LIGASE_II"/>
    <property type="match status" value="1"/>
</dbReference>
<accession>Q662M6</accession>
<sequence>MDVKTLKGFKDYLPKDSLIRIHIVKQIFSVLNSYNFDLIDTPVLEYSELLLKKSGDESEKQIYRFKDHGGRDVSMRFDLTIPFARFVATNISDLKFPFRRSQFGKVFRGENSQKGRYREFMQFDFDIVGEDGFRADAEILSVVYYGLEEIFLNFIEGINKKFIIHYSHLGILNSFFEKLGIKEESIFILRNIDKIDKIGIDKVKEALLLKIEKEAVDSILSLVNLQGAFKDKIQALKSILGDNESVKRVEDVYRHLSLLKIQDSFNLNLKISGGLDYYTGIVFESEVFGSNMGSVCSGGRYDNLVSSYSSSIQKVSGVGGSFGVDRIKDIIDLEQFSYIKIFVTKARSKVLIVNLDSALQNYYYELATRFRNHDYSKVKNISCEVYFKNKNGKNIKEQIEYALNKEIRFLVFVGQEEYKENKIKVRDLTKKEELLLSFEEVINVIKCNEKLLCTPF</sequence>
<evidence type="ECO:0000255" key="1">
    <source>
        <dbReference type="HAMAP-Rule" id="MF_00127"/>
    </source>
</evidence>
<feature type="chain" id="PRO_0000136121" description="Histidine--tRNA ligase">
    <location>
        <begin position="1"/>
        <end position="456"/>
    </location>
</feature>
<keyword id="KW-0030">Aminoacyl-tRNA synthetase</keyword>
<keyword id="KW-0067">ATP-binding</keyword>
<keyword id="KW-0963">Cytoplasm</keyword>
<keyword id="KW-0436">Ligase</keyword>
<keyword id="KW-0547">Nucleotide-binding</keyword>
<keyword id="KW-0648">Protein biosynthesis</keyword>
<protein>
    <recommendedName>
        <fullName evidence="1">Histidine--tRNA ligase</fullName>
        <ecNumber evidence="1">6.1.1.21</ecNumber>
    </recommendedName>
    <alternativeName>
        <fullName evidence="1">Histidyl-tRNA synthetase</fullName>
        <shortName evidence="1">HisRS</shortName>
    </alternativeName>
</protein>
<comment type="catalytic activity">
    <reaction evidence="1">
        <text>tRNA(His) + L-histidine + ATP = L-histidyl-tRNA(His) + AMP + diphosphate + H(+)</text>
        <dbReference type="Rhea" id="RHEA:17313"/>
        <dbReference type="Rhea" id="RHEA-COMP:9665"/>
        <dbReference type="Rhea" id="RHEA-COMP:9689"/>
        <dbReference type="ChEBI" id="CHEBI:15378"/>
        <dbReference type="ChEBI" id="CHEBI:30616"/>
        <dbReference type="ChEBI" id="CHEBI:33019"/>
        <dbReference type="ChEBI" id="CHEBI:57595"/>
        <dbReference type="ChEBI" id="CHEBI:78442"/>
        <dbReference type="ChEBI" id="CHEBI:78527"/>
        <dbReference type="ChEBI" id="CHEBI:456215"/>
        <dbReference type="EC" id="6.1.1.21"/>
    </reaction>
</comment>
<comment type="subunit">
    <text evidence="1">Homodimer.</text>
</comment>
<comment type="subcellular location">
    <subcellularLocation>
        <location evidence="1">Cytoplasm</location>
    </subcellularLocation>
</comment>
<comment type="similarity">
    <text evidence="1">Belongs to the class-II aminoacyl-tRNA synthetase family.</text>
</comment>